<reference key="1">
    <citation type="submission" date="2007-09" db="EMBL/GenBank/DDBJ databases">
        <title>Complete genome sequence of Rickettsia akari.</title>
        <authorList>
            <person name="Madan A."/>
            <person name="Fahey J."/>
            <person name="Helton E."/>
            <person name="Ketteman M."/>
            <person name="Madan A."/>
            <person name="Rodrigues S."/>
            <person name="Sanchez A."/>
            <person name="Whiting M."/>
            <person name="Dasch G."/>
            <person name="Eremeeva M."/>
        </authorList>
    </citation>
    <scope>NUCLEOTIDE SEQUENCE [LARGE SCALE GENOMIC DNA]</scope>
    <source>
        <strain>Hartford</strain>
    </source>
</reference>
<organism>
    <name type="scientific">Rickettsia akari (strain Hartford)</name>
    <dbReference type="NCBI Taxonomy" id="293614"/>
    <lineage>
        <taxon>Bacteria</taxon>
        <taxon>Pseudomonadati</taxon>
        <taxon>Pseudomonadota</taxon>
        <taxon>Alphaproteobacteria</taxon>
        <taxon>Rickettsiales</taxon>
        <taxon>Rickettsiaceae</taxon>
        <taxon>Rickettsieae</taxon>
        <taxon>Rickettsia</taxon>
        <taxon>spotted fever group</taxon>
    </lineage>
</organism>
<keyword id="KW-0067">ATP-binding</keyword>
<keyword id="KW-0436">Ligase</keyword>
<keyword id="KW-0460">Magnesium</keyword>
<keyword id="KW-0479">Metal-binding</keyword>
<keyword id="KW-0547">Nucleotide-binding</keyword>
<keyword id="KW-0816">Tricarboxylic acid cycle</keyword>
<accession>A8GNF5</accession>
<name>SUCC_RICAH</name>
<dbReference type="EC" id="6.2.1.5" evidence="1"/>
<dbReference type="EMBL" id="CP000847">
    <property type="protein sequence ID" value="ABV74930.1"/>
    <property type="molecule type" value="Genomic_DNA"/>
</dbReference>
<dbReference type="RefSeq" id="WP_012149563.1">
    <property type="nucleotide sequence ID" value="NC_009881.1"/>
</dbReference>
<dbReference type="SMR" id="A8GNF5"/>
<dbReference type="STRING" id="293614.A1C_03220"/>
<dbReference type="KEGG" id="rak:A1C_03220"/>
<dbReference type="eggNOG" id="COG0045">
    <property type="taxonomic scope" value="Bacteria"/>
</dbReference>
<dbReference type="HOGENOM" id="CLU_037430_0_2_5"/>
<dbReference type="UniPathway" id="UPA00223">
    <property type="reaction ID" value="UER00999"/>
</dbReference>
<dbReference type="Proteomes" id="UP000006830">
    <property type="component" value="Chromosome"/>
</dbReference>
<dbReference type="GO" id="GO:0005829">
    <property type="term" value="C:cytosol"/>
    <property type="evidence" value="ECO:0007669"/>
    <property type="project" value="TreeGrafter"/>
</dbReference>
<dbReference type="GO" id="GO:0042709">
    <property type="term" value="C:succinate-CoA ligase complex"/>
    <property type="evidence" value="ECO:0007669"/>
    <property type="project" value="TreeGrafter"/>
</dbReference>
<dbReference type="GO" id="GO:0005524">
    <property type="term" value="F:ATP binding"/>
    <property type="evidence" value="ECO:0007669"/>
    <property type="project" value="UniProtKB-UniRule"/>
</dbReference>
<dbReference type="GO" id="GO:0000287">
    <property type="term" value="F:magnesium ion binding"/>
    <property type="evidence" value="ECO:0007669"/>
    <property type="project" value="UniProtKB-UniRule"/>
</dbReference>
<dbReference type="GO" id="GO:0004775">
    <property type="term" value="F:succinate-CoA ligase (ADP-forming) activity"/>
    <property type="evidence" value="ECO:0007669"/>
    <property type="project" value="UniProtKB-UniRule"/>
</dbReference>
<dbReference type="GO" id="GO:0004776">
    <property type="term" value="F:succinate-CoA ligase (GDP-forming) activity"/>
    <property type="evidence" value="ECO:0007669"/>
    <property type="project" value="RHEA"/>
</dbReference>
<dbReference type="GO" id="GO:0006104">
    <property type="term" value="P:succinyl-CoA metabolic process"/>
    <property type="evidence" value="ECO:0007669"/>
    <property type="project" value="TreeGrafter"/>
</dbReference>
<dbReference type="GO" id="GO:0006099">
    <property type="term" value="P:tricarboxylic acid cycle"/>
    <property type="evidence" value="ECO:0007669"/>
    <property type="project" value="UniProtKB-UniRule"/>
</dbReference>
<dbReference type="FunFam" id="3.30.1490.20:FF:000002">
    <property type="entry name" value="Succinate--CoA ligase [ADP-forming] subunit beta"/>
    <property type="match status" value="1"/>
</dbReference>
<dbReference type="FunFam" id="3.30.470.20:FF:000002">
    <property type="entry name" value="Succinate--CoA ligase [ADP-forming] subunit beta"/>
    <property type="match status" value="1"/>
</dbReference>
<dbReference type="FunFam" id="3.40.50.261:FF:000001">
    <property type="entry name" value="Succinate--CoA ligase [ADP-forming] subunit beta"/>
    <property type="match status" value="1"/>
</dbReference>
<dbReference type="Gene3D" id="3.30.1490.20">
    <property type="entry name" value="ATP-grasp fold, A domain"/>
    <property type="match status" value="1"/>
</dbReference>
<dbReference type="Gene3D" id="3.30.470.20">
    <property type="entry name" value="ATP-grasp fold, B domain"/>
    <property type="match status" value="1"/>
</dbReference>
<dbReference type="Gene3D" id="3.40.50.261">
    <property type="entry name" value="Succinyl-CoA synthetase domains"/>
    <property type="match status" value="1"/>
</dbReference>
<dbReference type="HAMAP" id="MF_00558">
    <property type="entry name" value="Succ_CoA_beta"/>
    <property type="match status" value="1"/>
</dbReference>
<dbReference type="InterPro" id="IPR011761">
    <property type="entry name" value="ATP-grasp"/>
</dbReference>
<dbReference type="InterPro" id="IPR013650">
    <property type="entry name" value="ATP-grasp_succ-CoA_synth-type"/>
</dbReference>
<dbReference type="InterPro" id="IPR013815">
    <property type="entry name" value="ATP_grasp_subdomain_1"/>
</dbReference>
<dbReference type="InterPro" id="IPR017866">
    <property type="entry name" value="Succ-CoA_synthase_bsu_CS"/>
</dbReference>
<dbReference type="InterPro" id="IPR005811">
    <property type="entry name" value="SUCC_ACL_C"/>
</dbReference>
<dbReference type="InterPro" id="IPR005809">
    <property type="entry name" value="Succ_CoA_ligase-like_bsu"/>
</dbReference>
<dbReference type="InterPro" id="IPR016102">
    <property type="entry name" value="Succinyl-CoA_synth-like"/>
</dbReference>
<dbReference type="NCBIfam" id="NF001913">
    <property type="entry name" value="PRK00696.1"/>
    <property type="match status" value="1"/>
</dbReference>
<dbReference type="NCBIfam" id="TIGR01016">
    <property type="entry name" value="sucCoAbeta"/>
    <property type="match status" value="1"/>
</dbReference>
<dbReference type="PANTHER" id="PTHR11815:SF10">
    <property type="entry name" value="SUCCINATE--COA LIGASE [GDP-FORMING] SUBUNIT BETA, MITOCHONDRIAL"/>
    <property type="match status" value="1"/>
</dbReference>
<dbReference type="PANTHER" id="PTHR11815">
    <property type="entry name" value="SUCCINYL-COA SYNTHETASE BETA CHAIN"/>
    <property type="match status" value="1"/>
</dbReference>
<dbReference type="Pfam" id="PF08442">
    <property type="entry name" value="ATP-grasp_2"/>
    <property type="match status" value="1"/>
</dbReference>
<dbReference type="Pfam" id="PF00549">
    <property type="entry name" value="Ligase_CoA"/>
    <property type="match status" value="1"/>
</dbReference>
<dbReference type="PIRSF" id="PIRSF001554">
    <property type="entry name" value="SucCS_beta"/>
    <property type="match status" value="1"/>
</dbReference>
<dbReference type="SUPFAM" id="SSF56059">
    <property type="entry name" value="Glutathione synthetase ATP-binding domain-like"/>
    <property type="match status" value="1"/>
</dbReference>
<dbReference type="SUPFAM" id="SSF52210">
    <property type="entry name" value="Succinyl-CoA synthetase domains"/>
    <property type="match status" value="1"/>
</dbReference>
<dbReference type="PROSITE" id="PS50975">
    <property type="entry name" value="ATP_GRASP"/>
    <property type="match status" value="1"/>
</dbReference>
<dbReference type="PROSITE" id="PS01217">
    <property type="entry name" value="SUCCINYL_COA_LIG_3"/>
    <property type="match status" value="1"/>
</dbReference>
<sequence length="386" mass="41665">MNIHEYQAKEILRKYGVPTSTGLVVTKTEKINETIDKLNTEVYVVKAQIHAGGRGKAGGVKVVKSKEEAKKVAHDMFGINLVTHQTEPQGQKVNCLYIESGCDILKEYYFSIVFDRSASCITFIASTEGGVDIEEVAAKTPAKIIKFSVDPATGLQDFHMRGIAYELGFKDNQAKQMKEIVKSVYNAFVETDAAQIEINPLIVQTDGNLLALDAKITFDDNGLFKHPNITAMRDHDEEDPLETRAANAGLSYVKMGGNIGCMVNGAGLAMATMDIIKLYGASPANFLDVGGGADRERVKEALKIILSDKEVQGILVNIFGGIMRCDIIAEGIIAAAKDIGIKVPLVVRLAGTNVEKGEEILSNSGLDIIPAHDLADAANKIVAAIR</sequence>
<comment type="function">
    <text evidence="1">Succinyl-CoA synthetase functions in the citric acid cycle (TCA), coupling the hydrolysis of succinyl-CoA to the synthesis of either ATP or GTP and thus represents the only step of substrate-level phosphorylation in the TCA. The beta subunit provides nucleotide specificity of the enzyme and binds the substrate succinate, while the binding sites for coenzyme A and phosphate are found in the alpha subunit.</text>
</comment>
<comment type="catalytic activity">
    <reaction evidence="1">
        <text>succinate + ATP + CoA = succinyl-CoA + ADP + phosphate</text>
        <dbReference type="Rhea" id="RHEA:17661"/>
        <dbReference type="ChEBI" id="CHEBI:30031"/>
        <dbReference type="ChEBI" id="CHEBI:30616"/>
        <dbReference type="ChEBI" id="CHEBI:43474"/>
        <dbReference type="ChEBI" id="CHEBI:57287"/>
        <dbReference type="ChEBI" id="CHEBI:57292"/>
        <dbReference type="ChEBI" id="CHEBI:456216"/>
        <dbReference type="EC" id="6.2.1.5"/>
    </reaction>
    <physiologicalReaction direction="right-to-left" evidence="1">
        <dbReference type="Rhea" id="RHEA:17663"/>
    </physiologicalReaction>
</comment>
<comment type="catalytic activity">
    <reaction evidence="1">
        <text>GTP + succinate + CoA = succinyl-CoA + GDP + phosphate</text>
        <dbReference type="Rhea" id="RHEA:22120"/>
        <dbReference type="ChEBI" id="CHEBI:30031"/>
        <dbReference type="ChEBI" id="CHEBI:37565"/>
        <dbReference type="ChEBI" id="CHEBI:43474"/>
        <dbReference type="ChEBI" id="CHEBI:57287"/>
        <dbReference type="ChEBI" id="CHEBI:57292"/>
        <dbReference type="ChEBI" id="CHEBI:58189"/>
    </reaction>
    <physiologicalReaction direction="right-to-left" evidence="1">
        <dbReference type="Rhea" id="RHEA:22122"/>
    </physiologicalReaction>
</comment>
<comment type="cofactor">
    <cofactor evidence="1">
        <name>Mg(2+)</name>
        <dbReference type="ChEBI" id="CHEBI:18420"/>
    </cofactor>
    <text evidence="1">Binds 1 Mg(2+) ion per subunit.</text>
</comment>
<comment type="pathway">
    <text evidence="1">Carbohydrate metabolism; tricarboxylic acid cycle; succinate from succinyl-CoA (ligase route): step 1/1.</text>
</comment>
<comment type="subunit">
    <text evidence="1">Heterotetramer of two alpha and two beta subunits.</text>
</comment>
<comment type="similarity">
    <text evidence="1">Belongs to the succinate/malate CoA ligase beta subunit family.</text>
</comment>
<evidence type="ECO:0000255" key="1">
    <source>
        <dbReference type="HAMAP-Rule" id="MF_00558"/>
    </source>
</evidence>
<feature type="chain" id="PRO_1000082199" description="Succinate--CoA ligase [ADP-forming] subunit beta">
    <location>
        <begin position="1"/>
        <end position="386"/>
    </location>
</feature>
<feature type="domain" description="ATP-grasp" evidence="1">
    <location>
        <begin position="9"/>
        <end position="244"/>
    </location>
</feature>
<feature type="binding site" evidence="1">
    <location>
        <position position="46"/>
    </location>
    <ligand>
        <name>ATP</name>
        <dbReference type="ChEBI" id="CHEBI:30616"/>
    </ligand>
</feature>
<feature type="binding site" evidence="1">
    <location>
        <begin position="53"/>
        <end position="55"/>
    </location>
    <ligand>
        <name>ATP</name>
        <dbReference type="ChEBI" id="CHEBI:30616"/>
    </ligand>
</feature>
<feature type="binding site" evidence="1">
    <location>
        <position position="99"/>
    </location>
    <ligand>
        <name>ATP</name>
        <dbReference type="ChEBI" id="CHEBI:30616"/>
    </ligand>
</feature>
<feature type="binding site" evidence="1">
    <location>
        <position position="102"/>
    </location>
    <ligand>
        <name>ATP</name>
        <dbReference type="ChEBI" id="CHEBI:30616"/>
    </ligand>
</feature>
<feature type="binding site" evidence="1">
    <location>
        <position position="107"/>
    </location>
    <ligand>
        <name>ATP</name>
        <dbReference type="ChEBI" id="CHEBI:30616"/>
    </ligand>
</feature>
<feature type="binding site" evidence="1">
    <location>
        <position position="199"/>
    </location>
    <ligand>
        <name>Mg(2+)</name>
        <dbReference type="ChEBI" id="CHEBI:18420"/>
    </ligand>
</feature>
<feature type="binding site" evidence="1">
    <location>
        <position position="213"/>
    </location>
    <ligand>
        <name>Mg(2+)</name>
        <dbReference type="ChEBI" id="CHEBI:18420"/>
    </ligand>
</feature>
<feature type="binding site" evidence="1">
    <location>
        <position position="264"/>
    </location>
    <ligand>
        <name>substrate</name>
        <note>ligand shared with subunit alpha</note>
    </ligand>
</feature>
<feature type="binding site" evidence="1">
    <location>
        <begin position="321"/>
        <end position="323"/>
    </location>
    <ligand>
        <name>substrate</name>
        <note>ligand shared with subunit alpha</note>
    </ligand>
</feature>
<proteinExistence type="inferred from homology"/>
<gene>
    <name evidence="1" type="primary">sucC</name>
    <name type="ordered locus">A1C_03220</name>
</gene>
<protein>
    <recommendedName>
        <fullName evidence="1">Succinate--CoA ligase [ADP-forming] subunit beta</fullName>
        <ecNumber evidence="1">6.2.1.5</ecNumber>
    </recommendedName>
    <alternativeName>
        <fullName evidence="1">Succinyl-CoA synthetase subunit beta</fullName>
        <shortName evidence="1">SCS-beta</shortName>
    </alternativeName>
</protein>